<organism>
    <name type="scientific">Yarrowia lipolytica (strain CLIB 122 / E 150)</name>
    <name type="common">Yeast</name>
    <name type="synonym">Candida lipolytica</name>
    <dbReference type="NCBI Taxonomy" id="284591"/>
    <lineage>
        <taxon>Eukaryota</taxon>
        <taxon>Fungi</taxon>
        <taxon>Dikarya</taxon>
        <taxon>Ascomycota</taxon>
        <taxon>Saccharomycotina</taxon>
        <taxon>Dipodascomycetes</taxon>
        <taxon>Dipodascales</taxon>
        <taxon>Dipodascales incertae sedis</taxon>
        <taxon>Yarrowia</taxon>
    </lineage>
</organism>
<proteinExistence type="inferred from homology"/>
<sequence length="471" mass="51687">MAGVRFLDLVKPFTPFLPEVQAPERKVPFNQKIMWTAVTLMIFLVMSEIPLYGINSSDKSDALYWLRMMLASNRGSLMELGITPIVSSGMVFQLLGGTQLIEVNMDLKSDRELYQTAQKLFAIILSLGQATVYVLTGMYGPPKDLGVGVCLLLIFQLVLAALVVILLDELLQKGYGLGSGISLFIATNICEQIFWKAFAPTTVNKGRGYEFEGAIVAFVHLLFTRKDKKRAIIEAFTRQDLPNMSQLVTTVAIFAAVIYLQGFRVDIPVKSSKQRGPYGVFPIKLFYTSNLPIMLQSALTSNIFIISQMLFKKFPTNVLVRLLGVWDGREGMQQLFPVSGIAYYMQPPFNAKEALADPVKTVIYIAFVLGVCAVFSATWIEISGSSPRDVAKQFKEQGLVIAGRRETSAYKELKRIIPTAAAFGGATIGALSVASDLLGALSSGTGILMAVTTIYGYYEMAAKEGYVDAAI</sequence>
<reference key="1">
    <citation type="journal article" date="1997" name="J. Cell Sci.">
        <title>Cloning of SEC61 homologues from Schizosaccharomyces pombe and Yarrowia lipolytica reveals the extent of functional conservation within this core component of the ER translocation machinery.</title>
        <authorList>
            <person name="Broughton J."/>
            <person name="Swennen D."/>
            <person name="Wilkinson B.M."/>
            <person name="Joyet P."/>
            <person name="Gaillardin C."/>
            <person name="Stirling C.J."/>
        </authorList>
    </citation>
    <scope>NUCLEOTIDE SEQUENCE [GENOMIC DNA]</scope>
    <source>
        <strain>ATCC 20460 / W29 / CBS 7504 / IFP29</strain>
    </source>
</reference>
<reference key="2">
    <citation type="journal article" date="2004" name="Nature">
        <title>Genome evolution in yeasts.</title>
        <authorList>
            <person name="Dujon B."/>
            <person name="Sherman D."/>
            <person name="Fischer G."/>
            <person name="Durrens P."/>
            <person name="Casaregola S."/>
            <person name="Lafontaine I."/>
            <person name="de Montigny J."/>
            <person name="Marck C."/>
            <person name="Neuveglise C."/>
            <person name="Talla E."/>
            <person name="Goffard N."/>
            <person name="Frangeul L."/>
            <person name="Aigle M."/>
            <person name="Anthouard V."/>
            <person name="Babour A."/>
            <person name="Barbe V."/>
            <person name="Barnay S."/>
            <person name="Blanchin S."/>
            <person name="Beckerich J.-M."/>
            <person name="Beyne E."/>
            <person name="Bleykasten C."/>
            <person name="Boisrame A."/>
            <person name="Boyer J."/>
            <person name="Cattolico L."/>
            <person name="Confanioleri F."/>
            <person name="de Daruvar A."/>
            <person name="Despons L."/>
            <person name="Fabre E."/>
            <person name="Fairhead C."/>
            <person name="Ferry-Dumazet H."/>
            <person name="Groppi A."/>
            <person name="Hantraye F."/>
            <person name="Hennequin C."/>
            <person name="Jauniaux N."/>
            <person name="Joyet P."/>
            <person name="Kachouri R."/>
            <person name="Kerrest A."/>
            <person name="Koszul R."/>
            <person name="Lemaire M."/>
            <person name="Lesur I."/>
            <person name="Ma L."/>
            <person name="Muller H."/>
            <person name="Nicaud J.-M."/>
            <person name="Nikolski M."/>
            <person name="Oztas S."/>
            <person name="Ozier-Kalogeropoulos O."/>
            <person name="Pellenz S."/>
            <person name="Potier S."/>
            <person name="Richard G.-F."/>
            <person name="Straub M.-L."/>
            <person name="Suleau A."/>
            <person name="Swennen D."/>
            <person name="Tekaia F."/>
            <person name="Wesolowski-Louvel M."/>
            <person name="Westhof E."/>
            <person name="Wirth B."/>
            <person name="Zeniou-Meyer M."/>
            <person name="Zivanovic Y."/>
            <person name="Bolotin-Fukuhara M."/>
            <person name="Thierry A."/>
            <person name="Bouchier C."/>
            <person name="Caudron B."/>
            <person name="Scarpelli C."/>
            <person name="Gaillardin C."/>
            <person name="Weissenbach J."/>
            <person name="Wincker P."/>
            <person name="Souciet J.-L."/>
        </authorList>
    </citation>
    <scope>NUCLEOTIDE SEQUENCE [LARGE SCALE GENOMIC DNA]</scope>
    <source>
        <strain>CLIB 122 / E 150</strain>
    </source>
</reference>
<gene>
    <name type="primary">SEC61</name>
    <name type="ordered locus">YALI0E21912g</name>
</gene>
<name>SC61A_YARLI</name>
<accession>P78979</accession>
<accession>O00099</accession>
<accession>Q6C514</accession>
<feature type="chain" id="PRO_0000131788" description="Protein transport protein SEC61 subunit alpha">
    <location>
        <begin position="1"/>
        <end position="471"/>
    </location>
</feature>
<feature type="topological domain" description="Cytoplasmic" evidence="2">
    <location>
        <begin position="1"/>
        <end position="33"/>
    </location>
</feature>
<feature type="transmembrane region" description="Helical" evidence="2">
    <location>
        <begin position="34"/>
        <end position="54"/>
    </location>
</feature>
<feature type="topological domain" description="Lumenal" evidence="2">
    <location>
        <begin position="55"/>
        <end position="76"/>
    </location>
</feature>
<feature type="transmembrane region" description="Helical" evidence="2">
    <location>
        <begin position="77"/>
        <end position="97"/>
    </location>
</feature>
<feature type="topological domain" description="Cytoplasmic" evidence="2">
    <location>
        <begin position="98"/>
        <end position="119"/>
    </location>
</feature>
<feature type="transmembrane region" description="Helical" evidence="2">
    <location>
        <begin position="120"/>
        <end position="140"/>
    </location>
</feature>
<feature type="topological domain" description="Lumenal" evidence="2">
    <location>
        <begin position="141"/>
        <end position="146"/>
    </location>
</feature>
<feature type="transmembrane region" description="Helical" evidence="2">
    <location>
        <begin position="147"/>
        <end position="167"/>
    </location>
</feature>
<feature type="topological domain" description="Cytoplasmic" evidence="2">
    <location>
        <begin position="168"/>
        <end position="246"/>
    </location>
</feature>
<feature type="transmembrane region" description="Helical" evidence="2">
    <location>
        <begin position="247"/>
        <end position="267"/>
    </location>
</feature>
<feature type="topological domain" description="Lumenal" evidence="2">
    <location>
        <begin position="268"/>
        <end position="361"/>
    </location>
</feature>
<feature type="transmembrane region" description="Helical" evidence="2">
    <location>
        <begin position="362"/>
        <end position="382"/>
    </location>
</feature>
<feature type="topological domain" description="Cytoplasmic" evidence="2">
    <location>
        <begin position="383"/>
        <end position="415"/>
    </location>
</feature>
<feature type="transmembrane region" description="Helical" evidence="2">
    <location>
        <begin position="416"/>
        <end position="434"/>
    </location>
</feature>
<feature type="topological domain" description="Lumenal" evidence="2">
    <location>
        <begin position="435"/>
        <end position="440"/>
    </location>
</feature>
<feature type="transmembrane region" description="Helical" evidence="2">
    <location>
        <begin position="441"/>
        <end position="458"/>
    </location>
</feature>
<feature type="topological domain" description="Cytoplasmic" evidence="2">
    <location>
        <begin position="459"/>
        <end position="471"/>
    </location>
</feature>
<feature type="sequence conflict" description="In Ref. 1." evidence="3" ref="1">
    <original>A</original>
    <variation>T</variation>
    <location>
        <position position="461"/>
    </location>
</feature>
<feature type="sequence conflict" description="In Ref. 1." evidence="3" ref="1">
    <original>I</original>
    <variation>N</variation>
    <location>
        <position position="471"/>
    </location>
</feature>
<dbReference type="EMBL" id="Y11322">
    <property type="protein sequence ID" value="CAA72175.1"/>
    <property type="molecule type" value="Genomic_DNA"/>
</dbReference>
<dbReference type="EMBL" id="CR382131">
    <property type="protein sequence ID" value="CAG79843.1"/>
    <property type="molecule type" value="Genomic_DNA"/>
</dbReference>
<dbReference type="PIR" id="T12065">
    <property type="entry name" value="T12065"/>
</dbReference>
<dbReference type="RefSeq" id="XP_504248.1">
    <property type="nucleotide sequence ID" value="XM_504248.1"/>
</dbReference>
<dbReference type="SMR" id="P78979"/>
<dbReference type="FunCoup" id="P78979">
    <property type="interactions" value="960"/>
</dbReference>
<dbReference type="STRING" id="284591.P78979"/>
<dbReference type="EnsemblFungi" id="CAG79843">
    <property type="protein sequence ID" value="CAG79843"/>
    <property type="gene ID" value="YALI0_E21912g"/>
</dbReference>
<dbReference type="KEGG" id="yli:2911750"/>
<dbReference type="VEuPathDB" id="FungiDB:YALI0_E21912g"/>
<dbReference type="HOGENOM" id="CLU_031763_2_1_1"/>
<dbReference type="InParanoid" id="P78979"/>
<dbReference type="OMA" id="PMMRQMF"/>
<dbReference type="OrthoDB" id="110082at4891"/>
<dbReference type="Proteomes" id="UP000001300">
    <property type="component" value="Chromosome E"/>
</dbReference>
<dbReference type="GO" id="GO:0000324">
    <property type="term" value="C:fungal-type vacuole"/>
    <property type="evidence" value="ECO:0007669"/>
    <property type="project" value="EnsemblFungi"/>
</dbReference>
<dbReference type="GO" id="GO:0005784">
    <property type="term" value="C:Sec61 translocon complex"/>
    <property type="evidence" value="ECO:0000318"/>
    <property type="project" value="GO_Central"/>
</dbReference>
<dbReference type="GO" id="GO:1904680">
    <property type="term" value="F:peptide transmembrane transporter activity"/>
    <property type="evidence" value="ECO:0007669"/>
    <property type="project" value="EnsemblFungi"/>
</dbReference>
<dbReference type="GO" id="GO:0008320">
    <property type="term" value="F:protein transmembrane transporter activity"/>
    <property type="evidence" value="ECO:0000318"/>
    <property type="project" value="GO_Central"/>
</dbReference>
<dbReference type="GO" id="GO:0015450">
    <property type="term" value="F:protein-transporting ATPase activity"/>
    <property type="evidence" value="ECO:0007669"/>
    <property type="project" value="EnsemblFungi"/>
</dbReference>
<dbReference type="GO" id="GO:0043022">
    <property type="term" value="F:ribosome binding"/>
    <property type="evidence" value="ECO:0000318"/>
    <property type="project" value="GO_Central"/>
</dbReference>
<dbReference type="GO" id="GO:0005048">
    <property type="term" value="F:signal sequence binding"/>
    <property type="evidence" value="ECO:0000318"/>
    <property type="project" value="GO_Central"/>
</dbReference>
<dbReference type="GO" id="GO:0070843">
    <property type="term" value="P:misfolded protein transport"/>
    <property type="evidence" value="ECO:0007669"/>
    <property type="project" value="EnsemblFungi"/>
</dbReference>
<dbReference type="GO" id="GO:0031204">
    <property type="term" value="P:post-translational protein targeting to membrane, translocation"/>
    <property type="evidence" value="ECO:0000318"/>
    <property type="project" value="GO_Central"/>
</dbReference>
<dbReference type="GO" id="GO:0030970">
    <property type="term" value="P:retrograde protein transport, ER to cytosol"/>
    <property type="evidence" value="ECO:0007669"/>
    <property type="project" value="EnsemblFungi"/>
</dbReference>
<dbReference type="GO" id="GO:0006616">
    <property type="term" value="P:SRP-dependent cotranslational protein targeting to membrane, translocation"/>
    <property type="evidence" value="ECO:0000318"/>
    <property type="project" value="GO_Central"/>
</dbReference>
<dbReference type="FunFam" id="1.10.3370.10:FF:000002">
    <property type="entry name" value="Transport Sec61 subunit alpha isoform 2"/>
    <property type="match status" value="1"/>
</dbReference>
<dbReference type="Gene3D" id="1.10.3370.10">
    <property type="entry name" value="SecY subunit domain"/>
    <property type="match status" value="1"/>
</dbReference>
<dbReference type="InterPro" id="IPR002208">
    <property type="entry name" value="SecY/SEC61-alpha"/>
</dbReference>
<dbReference type="InterPro" id="IPR030659">
    <property type="entry name" value="SecY_CS"/>
</dbReference>
<dbReference type="InterPro" id="IPR023201">
    <property type="entry name" value="SecY_dom_sf"/>
</dbReference>
<dbReference type="InterPro" id="IPR019561">
    <property type="entry name" value="Translocon_Sec61/SecY_plug_dom"/>
</dbReference>
<dbReference type="NCBIfam" id="TIGR00967">
    <property type="entry name" value="3a0501s007"/>
    <property type="match status" value="1"/>
</dbReference>
<dbReference type="NCBIfam" id="NF006341">
    <property type="entry name" value="PRK08568.1-5"/>
    <property type="match status" value="1"/>
</dbReference>
<dbReference type="PANTHER" id="PTHR10906">
    <property type="entry name" value="SECY/SEC61-ALPHA FAMILY MEMBER"/>
    <property type="match status" value="1"/>
</dbReference>
<dbReference type="Pfam" id="PF10559">
    <property type="entry name" value="Plug_translocon"/>
    <property type="match status" value="1"/>
</dbReference>
<dbReference type="Pfam" id="PF00344">
    <property type="entry name" value="SecY"/>
    <property type="match status" value="1"/>
</dbReference>
<dbReference type="PIRSF" id="PIRSF004557">
    <property type="entry name" value="SecY"/>
    <property type="match status" value="1"/>
</dbReference>
<dbReference type="SUPFAM" id="SSF103491">
    <property type="entry name" value="Preprotein translocase SecY subunit"/>
    <property type="match status" value="1"/>
</dbReference>
<dbReference type="PROSITE" id="PS00755">
    <property type="entry name" value="SECY_1"/>
    <property type="match status" value="1"/>
</dbReference>
<dbReference type="PROSITE" id="PS00756">
    <property type="entry name" value="SECY_2"/>
    <property type="match status" value="1"/>
</dbReference>
<protein>
    <recommendedName>
        <fullName>Protein transport protein SEC61 subunit alpha</fullName>
    </recommendedName>
</protein>
<comment type="function">
    <text evidence="1">Appears to play a crucial role in the insertion of secretory and membrane polypeptides into the ER. It is required for assembly of membrane and secretory proteins and is essential for cell growth. It interacts with other membrane proteins required for protein translocation. Upon binding to SEC62/63 complex, secretory precursor polypeptides may engage SEC61 to begin membrane penetration event. A cycle of assembly and disassembly of SEC62/63 from SEC61 may govern the activity of the translocase (By similarity).</text>
</comment>
<comment type="subunit">
    <text evidence="1">Heterotrimeric complex composed of SEC61-alpha, SEC61-beta and SEC61-gamma.</text>
</comment>
<comment type="subcellular location">
    <subcellularLocation>
        <location>Endoplasmic reticulum membrane</location>
        <topology>Multi-pass membrane protein</topology>
    </subcellularLocation>
</comment>
<comment type="similarity">
    <text evidence="3">Belongs to the SecY/SEC61-alpha family.</text>
</comment>
<keyword id="KW-0256">Endoplasmic reticulum</keyword>
<keyword id="KW-0472">Membrane</keyword>
<keyword id="KW-0653">Protein transport</keyword>
<keyword id="KW-1185">Reference proteome</keyword>
<keyword id="KW-0811">Translocation</keyword>
<keyword id="KW-0812">Transmembrane</keyword>
<keyword id="KW-1133">Transmembrane helix</keyword>
<keyword id="KW-0813">Transport</keyword>
<evidence type="ECO:0000250" key="1"/>
<evidence type="ECO:0000255" key="2"/>
<evidence type="ECO:0000305" key="3"/>